<dbReference type="EMBL" id="BC149430">
    <property type="status" value="NOT_ANNOTATED_CDS"/>
    <property type="molecule type" value="mRNA"/>
</dbReference>
<dbReference type="EMBL" id="BC149880">
    <property type="protein sequence ID" value="AAI49881.1"/>
    <property type="molecule type" value="mRNA"/>
</dbReference>
<dbReference type="RefSeq" id="NP_001095397.2">
    <molecule id="A6QQL0-1"/>
    <property type="nucleotide sequence ID" value="NM_001101927.2"/>
</dbReference>
<dbReference type="SMR" id="A6QQL0"/>
<dbReference type="FunCoup" id="A6QQL0">
    <property type="interactions" value="3064"/>
</dbReference>
<dbReference type="STRING" id="9913.ENSBTAP00000065627"/>
<dbReference type="PaxDb" id="9913-ENSBTAP00000012083"/>
<dbReference type="Ensembl" id="ENSBTAT00000053948.3">
    <molecule id="A6QQL0-2"/>
    <property type="protein sequence ID" value="ENSBTAP00000050067.3"/>
    <property type="gene ID" value="ENSBTAG00000009167.7"/>
</dbReference>
<dbReference type="Ensembl" id="ENSBTAT00000086426.1">
    <molecule id="A6QQL0-1"/>
    <property type="protein sequence ID" value="ENSBTAP00000065627.1"/>
    <property type="gene ID" value="ENSBTAG00000009167.7"/>
</dbReference>
<dbReference type="GeneID" id="510499"/>
<dbReference type="KEGG" id="bta:510499"/>
<dbReference type="CTD" id="121260"/>
<dbReference type="VEuPathDB" id="HostDB:ENSBTAG00000009167"/>
<dbReference type="eggNOG" id="KOG1237">
    <property type="taxonomic scope" value="Eukaryota"/>
</dbReference>
<dbReference type="GeneTree" id="ENSGT00940000159361"/>
<dbReference type="InParanoid" id="A6QQL0"/>
<dbReference type="OMA" id="QMMGVWF"/>
<dbReference type="OrthoDB" id="8904098at2759"/>
<dbReference type="Reactome" id="R-BTA-427975">
    <property type="pathway name" value="Proton/oligopeptide cotransporters"/>
</dbReference>
<dbReference type="Reactome" id="R-BTA-6798695">
    <property type="pathway name" value="Neutrophil degranulation"/>
</dbReference>
<dbReference type="Reactome" id="R-BTA-9860276">
    <property type="pathway name" value="SLC15A4:TASL-dependent IRF5 activation"/>
</dbReference>
<dbReference type="Proteomes" id="UP000009136">
    <property type="component" value="Chromosome 17"/>
</dbReference>
<dbReference type="Bgee" id="ENSBTAG00000009167">
    <property type="expression patterns" value="Expressed in pons and 104 other cell types or tissues"/>
</dbReference>
<dbReference type="GO" id="GO:0031901">
    <property type="term" value="C:early endosome membrane"/>
    <property type="evidence" value="ECO:0007669"/>
    <property type="project" value="UniProtKB-SubCell"/>
</dbReference>
<dbReference type="GO" id="GO:0036020">
    <property type="term" value="C:endolysosome membrane"/>
    <property type="evidence" value="ECO:0000250"/>
    <property type="project" value="UniProtKB"/>
</dbReference>
<dbReference type="GO" id="GO:0005765">
    <property type="term" value="C:lysosomal membrane"/>
    <property type="evidence" value="ECO:0000250"/>
    <property type="project" value="UniProtKB"/>
</dbReference>
<dbReference type="GO" id="GO:0016020">
    <property type="term" value="C:membrane"/>
    <property type="evidence" value="ECO:0000318"/>
    <property type="project" value="GO_Central"/>
</dbReference>
<dbReference type="GO" id="GO:0071916">
    <property type="term" value="F:dipeptide transmembrane transporter activity"/>
    <property type="evidence" value="ECO:0000250"/>
    <property type="project" value="UniProtKB"/>
</dbReference>
<dbReference type="GO" id="GO:0005290">
    <property type="term" value="F:L-histidine transmembrane transporter activity"/>
    <property type="evidence" value="ECO:0000250"/>
    <property type="project" value="UniProtKB"/>
</dbReference>
<dbReference type="GO" id="GO:0015333">
    <property type="term" value="F:peptide:proton symporter activity"/>
    <property type="evidence" value="ECO:0000250"/>
    <property type="project" value="UniProtKB"/>
</dbReference>
<dbReference type="GO" id="GO:0015647">
    <property type="term" value="F:peptidoglycan transmembrane transporter activity"/>
    <property type="evidence" value="ECO:0000250"/>
    <property type="project" value="UniProtKB"/>
</dbReference>
<dbReference type="GO" id="GO:0140206">
    <property type="term" value="P:dipeptide import across plasma membrane"/>
    <property type="evidence" value="ECO:0000250"/>
    <property type="project" value="UniProtKB"/>
</dbReference>
<dbReference type="GO" id="GO:0015817">
    <property type="term" value="P:histidine transport"/>
    <property type="evidence" value="ECO:0000318"/>
    <property type="project" value="GO_Central"/>
</dbReference>
<dbReference type="GO" id="GO:0045087">
    <property type="term" value="P:innate immune response"/>
    <property type="evidence" value="ECO:0007669"/>
    <property type="project" value="UniProtKB-KW"/>
</dbReference>
<dbReference type="GO" id="GO:0089708">
    <property type="term" value="P:L-histidine transmembrane export from vacuole"/>
    <property type="evidence" value="ECO:0007669"/>
    <property type="project" value="Ensembl"/>
</dbReference>
<dbReference type="GO" id="GO:0033023">
    <property type="term" value="P:mast cell homeostasis"/>
    <property type="evidence" value="ECO:0000250"/>
    <property type="project" value="UniProtKB"/>
</dbReference>
<dbReference type="GO" id="GO:0015835">
    <property type="term" value="P:peptidoglycan transport"/>
    <property type="evidence" value="ECO:0000250"/>
    <property type="project" value="UniProtKB"/>
</dbReference>
<dbReference type="GO" id="GO:0045089">
    <property type="term" value="P:positive regulation of innate immune response"/>
    <property type="evidence" value="ECO:0000250"/>
    <property type="project" value="UniProtKB"/>
</dbReference>
<dbReference type="GO" id="GO:0070430">
    <property type="term" value="P:positive regulation of nucleotide-binding oligomerization domain containing 1 signaling pathway"/>
    <property type="evidence" value="ECO:0000250"/>
    <property type="project" value="UniProtKB"/>
</dbReference>
<dbReference type="GO" id="GO:0070434">
    <property type="term" value="P:positive regulation of nucleotide-binding oligomerization domain containing 2 signaling pathway"/>
    <property type="evidence" value="ECO:0000250"/>
    <property type="project" value="UniProtKB"/>
</dbReference>
<dbReference type="GO" id="GO:0034157">
    <property type="term" value="P:positive regulation of toll-like receptor 7 signaling pathway"/>
    <property type="evidence" value="ECO:0000250"/>
    <property type="project" value="UniProtKB"/>
</dbReference>
<dbReference type="GO" id="GO:0034161">
    <property type="term" value="P:positive regulation of toll-like receptor 8 signaling pathway"/>
    <property type="evidence" value="ECO:0000250"/>
    <property type="project" value="UniProtKB"/>
</dbReference>
<dbReference type="GO" id="GO:0034165">
    <property type="term" value="P:positive regulation of toll-like receptor 9 signaling pathway"/>
    <property type="evidence" value="ECO:0000250"/>
    <property type="project" value="UniProtKB"/>
</dbReference>
<dbReference type="GO" id="GO:0015031">
    <property type="term" value="P:protein transport"/>
    <property type="evidence" value="ECO:0007669"/>
    <property type="project" value="UniProtKB-KW"/>
</dbReference>
<dbReference type="GO" id="GO:0048302">
    <property type="term" value="P:regulation of isotype switching to IgG isotypes"/>
    <property type="evidence" value="ECO:0000250"/>
    <property type="project" value="UniProtKB"/>
</dbReference>
<dbReference type="GO" id="GO:0070424">
    <property type="term" value="P:regulation of nucleotide-binding domain, leucine rich repeat containing receptor signaling pathway"/>
    <property type="evidence" value="ECO:0000250"/>
    <property type="project" value="UniProtKB"/>
</dbReference>
<dbReference type="CDD" id="cd17348">
    <property type="entry name" value="MFS_SLC15A3_4"/>
    <property type="match status" value="1"/>
</dbReference>
<dbReference type="FunFam" id="1.20.1250.20:FF:000212">
    <property type="entry name" value="Solute carrier family 15 member 4"/>
    <property type="match status" value="1"/>
</dbReference>
<dbReference type="Gene3D" id="1.20.1250.20">
    <property type="entry name" value="MFS general substrate transporter like domains"/>
    <property type="match status" value="1"/>
</dbReference>
<dbReference type="InterPro" id="IPR036259">
    <property type="entry name" value="MFS_trans_sf"/>
</dbReference>
<dbReference type="InterPro" id="IPR000109">
    <property type="entry name" value="POT_fam"/>
</dbReference>
<dbReference type="InterPro" id="IPR018456">
    <property type="entry name" value="PTR2_symporter_CS"/>
</dbReference>
<dbReference type="PANTHER" id="PTHR11654">
    <property type="entry name" value="OLIGOPEPTIDE TRANSPORTER-RELATED"/>
    <property type="match status" value="1"/>
</dbReference>
<dbReference type="Pfam" id="PF00854">
    <property type="entry name" value="PTR2"/>
    <property type="match status" value="1"/>
</dbReference>
<dbReference type="SUPFAM" id="SSF103473">
    <property type="entry name" value="MFS general substrate transporter"/>
    <property type="match status" value="1"/>
</dbReference>
<dbReference type="PROSITE" id="PS01023">
    <property type="entry name" value="PTR2_2"/>
    <property type="match status" value="1"/>
</dbReference>
<name>S15A4_BOVIN</name>
<keyword id="KW-0025">Alternative splicing</keyword>
<keyword id="KW-0967">Endosome</keyword>
<keyword id="KW-0391">Immunity</keyword>
<keyword id="KW-0399">Innate immunity</keyword>
<keyword id="KW-0458">Lysosome</keyword>
<keyword id="KW-0472">Membrane</keyword>
<keyword id="KW-0571">Peptide transport</keyword>
<keyword id="KW-0597">Phosphoprotein</keyword>
<keyword id="KW-0653">Protein transport</keyword>
<keyword id="KW-1185">Reference proteome</keyword>
<keyword id="KW-0769">Symport</keyword>
<keyword id="KW-0812">Transmembrane</keyword>
<keyword id="KW-1133">Transmembrane helix</keyword>
<keyword id="KW-0813">Transport</keyword>
<reference key="1">
    <citation type="submission" date="2007-07" db="EMBL/GenBank/DDBJ databases">
        <authorList>
            <consortium name="NIH - Mammalian Gene Collection (MGC) project"/>
        </authorList>
    </citation>
    <scope>NUCLEOTIDE SEQUENCE [LARGE SCALE MRNA] (ISOFORMS 1 AND 2)</scope>
    <source>
        <strain>Hereford</strain>
        <tissue>Basal ganglia</tissue>
    </source>
</reference>
<reference key="2">
    <citation type="journal article" date="2003" name="Pharm. Res.">
        <title>Preliminary investigation into the expression of proton-coupled oligopeptide transporters in neural retina and retinal pigment epithelium (RPE): lack of functional activity in RPE plasma membranes.</title>
        <authorList>
            <person name="Ocheltree S.M."/>
            <person name="Keep R.F."/>
            <person name="Shen H."/>
            <person name="Yang D."/>
            <person name="Hughes B.A."/>
            <person name="Smith D.E."/>
        </authorList>
    </citation>
    <scope>TISSUE SPECIFICITY</scope>
</reference>
<proteinExistence type="evidence at transcript level"/>
<protein>
    <recommendedName>
        <fullName evidence="8">Solute carrier family 15 member 4</fullName>
    </recommendedName>
    <alternativeName>
        <fullName evidence="6">Peptide/histidine transporter 1</fullName>
    </alternativeName>
</protein>
<accession>A6QQL0</accession>
<feature type="chain" id="PRO_0000338598" description="Solute carrier family 15 member 4">
    <location>
        <begin position="1"/>
        <end position="566"/>
    </location>
</feature>
<feature type="transmembrane region" description="Helical" evidence="4">
    <location>
        <begin position="38"/>
        <end position="58"/>
    </location>
</feature>
<feature type="transmembrane region" description="Helical" evidence="4">
    <location>
        <begin position="65"/>
        <end position="85"/>
    </location>
</feature>
<feature type="transmembrane region" description="Helical" evidence="4">
    <location>
        <begin position="94"/>
        <end position="114"/>
    </location>
</feature>
<feature type="transmembrane region" description="Helical" evidence="4">
    <location>
        <begin position="146"/>
        <end position="166"/>
    </location>
</feature>
<feature type="transmembrane region" description="Helical" evidence="4">
    <location>
        <begin position="187"/>
        <end position="207"/>
    </location>
</feature>
<feature type="transmembrane region" description="Helical" evidence="4">
    <location>
        <begin position="215"/>
        <end position="235"/>
    </location>
</feature>
<feature type="transmembrane region" description="Helical" evidence="4">
    <location>
        <begin position="311"/>
        <end position="331"/>
    </location>
</feature>
<feature type="transmembrane region" description="Helical" evidence="4">
    <location>
        <begin position="356"/>
        <end position="376"/>
    </location>
</feature>
<feature type="transmembrane region" description="Helical" evidence="4">
    <location>
        <begin position="398"/>
        <end position="418"/>
    </location>
</feature>
<feature type="transmembrane region" description="Helical" evidence="4">
    <location>
        <begin position="452"/>
        <end position="472"/>
    </location>
</feature>
<feature type="transmembrane region" description="Helical" evidence="4">
    <location>
        <begin position="483"/>
        <end position="503"/>
    </location>
</feature>
<feature type="transmembrane region" description="Helical" evidence="4">
    <location>
        <begin position="528"/>
        <end position="548"/>
    </location>
</feature>
<feature type="modified residue" description="Phosphoserine" evidence="2">
    <location>
        <position position="291"/>
    </location>
</feature>
<feature type="splice variant" id="VSP_034050" description="In isoform 2." evidence="7">
    <original>EGIGVFQQSSKHSLFDSCKMSRGGPFPEDKVEDVKALVKIVPVF</original>
    <variation>DFGKQEAGPREGEDHQPDHRKRRVLRRGLAHLVAGPAVRADRCQ</variation>
    <location>
        <begin position="275"/>
        <end position="318"/>
    </location>
</feature>
<feature type="splice variant" id="VSP_034051" description="In isoform 2." evidence="7">
    <location>
        <begin position="319"/>
        <end position="566"/>
    </location>
</feature>
<organism>
    <name type="scientific">Bos taurus</name>
    <name type="common">Bovine</name>
    <dbReference type="NCBI Taxonomy" id="9913"/>
    <lineage>
        <taxon>Eukaryota</taxon>
        <taxon>Metazoa</taxon>
        <taxon>Chordata</taxon>
        <taxon>Craniata</taxon>
        <taxon>Vertebrata</taxon>
        <taxon>Euteleostomi</taxon>
        <taxon>Mammalia</taxon>
        <taxon>Eutheria</taxon>
        <taxon>Laurasiatheria</taxon>
        <taxon>Artiodactyla</taxon>
        <taxon>Ruminantia</taxon>
        <taxon>Pecora</taxon>
        <taxon>Bovidae</taxon>
        <taxon>Bovinae</taxon>
        <taxon>Bos</taxon>
    </lineage>
</organism>
<sequence length="566" mass="61380">MEGAGDERAPLLGARRTAFAGRRAACAAVLLTELLERAAFYGVTANLVLFLNGTAFGWEGAEASQALLLFMGLTYLVSPFGGWLADARLGRARAILLSLALYLLGMLAFPLLAAPATRSALCGAPGPTNVRNCSAPPCTDTPTRYCAPAVLSALALVGLGVGAVKANITPFGADQVKDRGPEATRRFFNWFYWSINLGAIVSLGGIAYIQQNVSFVTGYAIPAVCIGVAFVVFLCGQTFFITKPPDGSAFTDMFRILVYSCRPQKRIREHSPSGEGIGVFQQSSKHSLFDSCKMSRGGPFPEDKVEDVKALVKIVPVFLALIPYWTVYFQMQTTYVLQSLHLKIPEISSITTNPHTFPAAWLTMFDAVLILLLIPLKDKLVDPILKRNGLLPSSLKRIAVGMFFVMCSAFAAGILESKRLDLVKEKTINQTIGNVVYYAADLPIWWQVPQYVLIGVSEIFASIAGLEFAYSAAPKSMQSAIMGLFFFFSGVGSFVGSGLLALVSLKAIGWMSSHTDFGNINGCYLNYYFFLLAAIQGATLLLFLIVSVKYDRQRSRANGTPASRRT</sequence>
<comment type="function">
    <text evidence="1 2 3">Proton-coupled amino-acid transporter that mediates the transmembrane transport of L-histidine and some di- and tripeptides from inside the lysosome to the cytosol, and plays a key role in innate immune response. Able to transport a variety of di- and tripeptides, including carnosine and some peptidoglycans (By similarity). Transporter activity is pH-dependent and maximized in the acidic lysosomal environment (By similarity). Involved in the detection of microbial pathogens by toll-like receptors (TLRs) and NOD-like receptors (NLRs), probably by mediating transport of bacterial peptidoglycans across the endolysosomal membrane: catalyzes the transport of certain bacterial peptidoglycans, such as muramyl dipeptide (MDP), the NOD2 ligand, and L-alanyl-gamma-D-glutamyl-meso-2,6-diaminoheptanedioate (tri-DAP), the NOD1 ligand. Required for TLR7, TLR8 and TLR9-mediated type I interferon (IFN-I) productions in plasmacytoid dendritic cells (pDCs). Independently of its transporter activity, also promotes the recruitment of innate immune adapter TASL to endolysosome downstream of TLR7, TLR8 and TLR9: TASL recruitment leads to the specific recruitment and activation of IRF5 (By similarity). Required for isotype class switch recombination to IgG2c isotype in response to TLR9 stimulation. Required for mast cell secretory-granule homeostasis by limiting mast cell functions and inflammatory responses (By similarity).</text>
</comment>
<comment type="catalytic activity">
    <reaction evidence="2">
        <text>glycylglycylglycine(out) + n H(+)(out) = glycylglycylglycine(in) + n H(+)(in)</text>
        <dbReference type="Rhea" id="RHEA:76391"/>
        <dbReference type="ChEBI" id="CHEBI:15378"/>
        <dbReference type="ChEBI" id="CHEBI:195214"/>
    </reaction>
    <physiologicalReaction direction="left-to-right" evidence="2">
        <dbReference type="Rhea" id="RHEA:76392"/>
    </physiologicalReaction>
</comment>
<comment type="catalytic activity">
    <reaction evidence="2">
        <text>N-acetyl-D-muramoyl-L-alanyl-D-isoglutamine(out) + n H(+)(out) = N-acetyl-D-muramoyl-L-alanyl-D-isoglutamine(in) + n H(+)(in)</text>
        <dbReference type="Rhea" id="RHEA:76371"/>
        <dbReference type="ChEBI" id="CHEBI:15378"/>
        <dbReference type="ChEBI" id="CHEBI:155830"/>
    </reaction>
    <physiologicalReaction direction="left-to-right" evidence="2">
        <dbReference type="Rhea" id="RHEA:76372"/>
    </physiologicalReaction>
</comment>
<comment type="catalytic activity">
    <reaction evidence="2">
        <text>L-alanyl-gamma-D-glutamyl-meso-2,6-diaminopimelate(out) + n H(+)(out) = L-alanyl-gamma-D-glutamyl-meso-2,6-diaminopimelate(in) + n H(+)(in)</text>
        <dbReference type="Rhea" id="RHEA:64412"/>
        <dbReference type="ChEBI" id="CHEBI:15378"/>
        <dbReference type="ChEBI" id="CHEBI:61401"/>
    </reaction>
    <physiologicalReaction direction="left-to-right" evidence="2">
        <dbReference type="Rhea" id="RHEA:64413"/>
    </physiologicalReaction>
</comment>
<comment type="catalytic activity">
    <reaction evidence="2">
        <text>carnosine(out) + n H(+)(out) = carnosine(in) + n H(+)(in)</text>
        <dbReference type="Rhea" id="RHEA:76383"/>
        <dbReference type="ChEBI" id="CHEBI:15378"/>
        <dbReference type="ChEBI" id="CHEBI:57485"/>
    </reaction>
    <physiologicalReaction direction="left-to-right" evidence="2">
        <dbReference type="Rhea" id="RHEA:76384"/>
    </physiologicalReaction>
</comment>
<comment type="catalytic activity">
    <reaction evidence="2">
        <text>L-histidine(out) + n H(+)(out) = L-histidine(in) + n H(+)(in)</text>
        <dbReference type="Rhea" id="RHEA:76379"/>
        <dbReference type="ChEBI" id="CHEBI:15378"/>
        <dbReference type="ChEBI" id="CHEBI:57595"/>
    </reaction>
    <physiologicalReaction direction="left-to-right" evidence="2">
        <dbReference type="Rhea" id="RHEA:76380"/>
    </physiologicalReaction>
</comment>
<comment type="subunit">
    <text evidence="2">Interacts with TASL; leading to TASL recruitment to endolysosome.</text>
</comment>
<comment type="subcellular location">
    <subcellularLocation>
        <location evidence="2">Lysosome membrane</location>
        <topology evidence="4">Multi-pass membrane protein</topology>
    </subcellularLocation>
    <subcellularLocation>
        <location evidence="2">Endosome membrane</location>
        <topology evidence="4">Multi-pass membrane protein</topology>
    </subcellularLocation>
    <subcellularLocation>
        <location evidence="3">Early endosome membrane</location>
        <topology evidence="4">Multi-pass membrane protein</topology>
    </subcellularLocation>
</comment>
<comment type="alternative products">
    <event type="alternative splicing"/>
    <isoform>
        <id>A6QQL0-1</id>
        <name>1</name>
        <sequence type="displayed"/>
    </isoform>
    <isoform>
        <id>A6QQL0-2</id>
        <name>2</name>
        <sequence type="described" ref="VSP_034050 VSP_034051"/>
    </isoform>
</comment>
<comment type="tissue specificity">
    <text evidence="5">Expressed in retinal fragment epithelium (RPE) and neural retina.</text>
</comment>
<comment type="similarity">
    <text evidence="8">Belongs to the major facilitator superfamily. Proton-dependent oligopeptide transporter (POT/PTR) (TC 2.A.17) family.</text>
</comment>
<comment type="sequence caution" evidence="8">
    <conflict type="erroneous termination">
        <sequence resource="EMBL" id="BC149430"/>
    </conflict>
    <text>Truncated C-terminus.</text>
</comment>
<gene>
    <name evidence="2" type="primary">SLC15A4</name>
    <name evidence="6" type="synonym">PHT1</name>
</gene>
<evidence type="ECO:0000250" key="1">
    <source>
        <dbReference type="UniProtKB" id="O09014"/>
    </source>
</evidence>
<evidence type="ECO:0000250" key="2">
    <source>
        <dbReference type="UniProtKB" id="Q8N697"/>
    </source>
</evidence>
<evidence type="ECO:0000250" key="3">
    <source>
        <dbReference type="UniProtKB" id="Q91W98"/>
    </source>
</evidence>
<evidence type="ECO:0000255" key="4"/>
<evidence type="ECO:0000269" key="5">
    <source>
    </source>
</evidence>
<evidence type="ECO:0000303" key="6">
    <source>
    </source>
</evidence>
<evidence type="ECO:0000303" key="7">
    <source ref="1"/>
</evidence>
<evidence type="ECO:0000305" key="8"/>